<dbReference type="EC" id="3.5.1.5" evidence="1"/>
<dbReference type="EMBL" id="CP001280">
    <property type="protein sequence ID" value="ACK50955.1"/>
    <property type="molecule type" value="Genomic_DNA"/>
</dbReference>
<dbReference type="RefSeq" id="WP_012591025.1">
    <property type="nucleotide sequence ID" value="NC_011666.1"/>
</dbReference>
<dbReference type="SMR" id="B8EPV1"/>
<dbReference type="STRING" id="395965.Msil_2013"/>
<dbReference type="KEGG" id="msl:Msil_2013"/>
<dbReference type="eggNOG" id="COG0831">
    <property type="taxonomic scope" value="Bacteria"/>
</dbReference>
<dbReference type="HOGENOM" id="CLU_145825_1_0_5"/>
<dbReference type="OrthoDB" id="9797217at2"/>
<dbReference type="UniPathway" id="UPA00258">
    <property type="reaction ID" value="UER00370"/>
</dbReference>
<dbReference type="Proteomes" id="UP000002257">
    <property type="component" value="Chromosome"/>
</dbReference>
<dbReference type="GO" id="GO:0005737">
    <property type="term" value="C:cytoplasm"/>
    <property type="evidence" value="ECO:0007669"/>
    <property type="project" value="UniProtKB-SubCell"/>
</dbReference>
<dbReference type="GO" id="GO:0016151">
    <property type="term" value="F:nickel cation binding"/>
    <property type="evidence" value="ECO:0007669"/>
    <property type="project" value="InterPro"/>
</dbReference>
<dbReference type="GO" id="GO:0009039">
    <property type="term" value="F:urease activity"/>
    <property type="evidence" value="ECO:0007669"/>
    <property type="project" value="UniProtKB-UniRule"/>
</dbReference>
<dbReference type="GO" id="GO:0043419">
    <property type="term" value="P:urea catabolic process"/>
    <property type="evidence" value="ECO:0007669"/>
    <property type="project" value="UniProtKB-UniRule"/>
</dbReference>
<dbReference type="CDD" id="cd00390">
    <property type="entry name" value="Urease_gamma"/>
    <property type="match status" value="1"/>
</dbReference>
<dbReference type="Gene3D" id="3.30.280.10">
    <property type="entry name" value="Urease, gamma-like subunit"/>
    <property type="match status" value="1"/>
</dbReference>
<dbReference type="HAMAP" id="MF_00739">
    <property type="entry name" value="Urease_gamma"/>
    <property type="match status" value="1"/>
</dbReference>
<dbReference type="InterPro" id="IPR012010">
    <property type="entry name" value="Urease_gamma"/>
</dbReference>
<dbReference type="InterPro" id="IPR002026">
    <property type="entry name" value="Urease_gamma/gamma-beta_su"/>
</dbReference>
<dbReference type="InterPro" id="IPR036463">
    <property type="entry name" value="Urease_gamma_sf"/>
</dbReference>
<dbReference type="InterPro" id="IPR050069">
    <property type="entry name" value="Urease_subunit"/>
</dbReference>
<dbReference type="NCBIfam" id="NF009712">
    <property type="entry name" value="PRK13241.1"/>
    <property type="match status" value="1"/>
</dbReference>
<dbReference type="NCBIfam" id="TIGR00193">
    <property type="entry name" value="urease_gam"/>
    <property type="match status" value="1"/>
</dbReference>
<dbReference type="PANTHER" id="PTHR33569">
    <property type="entry name" value="UREASE"/>
    <property type="match status" value="1"/>
</dbReference>
<dbReference type="PANTHER" id="PTHR33569:SF1">
    <property type="entry name" value="UREASE"/>
    <property type="match status" value="1"/>
</dbReference>
<dbReference type="Pfam" id="PF00547">
    <property type="entry name" value="Urease_gamma"/>
    <property type="match status" value="1"/>
</dbReference>
<dbReference type="PIRSF" id="PIRSF001223">
    <property type="entry name" value="Urease_gamma"/>
    <property type="match status" value="1"/>
</dbReference>
<dbReference type="SUPFAM" id="SSF54111">
    <property type="entry name" value="Urease, gamma-subunit"/>
    <property type="match status" value="1"/>
</dbReference>
<protein>
    <recommendedName>
        <fullName evidence="1">Urease subunit gamma</fullName>
        <ecNumber evidence="1">3.5.1.5</ecNumber>
    </recommendedName>
    <alternativeName>
        <fullName evidence="1">Urea amidohydrolase subunit gamma</fullName>
    </alternativeName>
</protein>
<comment type="catalytic activity">
    <reaction evidence="1">
        <text>urea + 2 H2O + H(+) = hydrogencarbonate + 2 NH4(+)</text>
        <dbReference type="Rhea" id="RHEA:20557"/>
        <dbReference type="ChEBI" id="CHEBI:15377"/>
        <dbReference type="ChEBI" id="CHEBI:15378"/>
        <dbReference type="ChEBI" id="CHEBI:16199"/>
        <dbReference type="ChEBI" id="CHEBI:17544"/>
        <dbReference type="ChEBI" id="CHEBI:28938"/>
        <dbReference type="EC" id="3.5.1.5"/>
    </reaction>
</comment>
<comment type="pathway">
    <text evidence="1">Nitrogen metabolism; urea degradation; CO(2) and NH(3) from urea (urease route): step 1/1.</text>
</comment>
<comment type="subunit">
    <text evidence="1">Heterotrimer of UreA (gamma), UreB (beta) and UreC (alpha) subunits. Three heterotrimers associate to form the active enzyme.</text>
</comment>
<comment type="subcellular location">
    <subcellularLocation>
        <location evidence="1">Cytoplasm</location>
    </subcellularLocation>
</comment>
<comment type="similarity">
    <text evidence="1">Belongs to the urease gamma subunit family.</text>
</comment>
<evidence type="ECO:0000255" key="1">
    <source>
        <dbReference type="HAMAP-Rule" id="MF_00739"/>
    </source>
</evidence>
<gene>
    <name evidence="1" type="primary">ureA</name>
    <name type="ordered locus">Msil_2013</name>
</gene>
<feature type="chain" id="PRO_1000199870" description="Urease subunit gamma">
    <location>
        <begin position="1"/>
        <end position="100"/>
    </location>
</feature>
<keyword id="KW-0963">Cytoplasm</keyword>
<keyword id="KW-0378">Hydrolase</keyword>
<keyword id="KW-1185">Reference proteome</keyword>
<sequence length="100" mass="10988">MNLSPREKDKLLVAMAAVVARRRLERGVKLNYPEAVALITDFVVEGARDGHSVADLMERGGAVIGREQVMEGVAEMIDEIQVEATFTDGTKLVTVHEPIR</sequence>
<accession>B8EPV1</accession>
<organism>
    <name type="scientific">Methylocella silvestris (strain DSM 15510 / CIP 108128 / LMG 27833 / NCIMB 13906 / BL2)</name>
    <dbReference type="NCBI Taxonomy" id="395965"/>
    <lineage>
        <taxon>Bacteria</taxon>
        <taxon>Pseudomonadati</taxon>
        <taxon>Pseudomonadota</taxon>
        <taxon>Alphaproteobacteria</taxon>
        <taxon>Hyphomicrobiales</taxon>
        <taxon>Beijerinckiaceae</taxon>
        <taxon>Methylocella</taxon>
    </lineage>
</organism>
<reference key="1">
    <citation type="journal article" date="2010" name="J. Bacteriol.">
        <title>Complete genome sequence of the aerobic facultative methanotroph Methylocella silvestris BL2.</title>
        <authorList>
            <person name="Chen Y."/>
            <person name="Crombie A."/>
            <person name="Rahman M.T."/>
            <person name="Dedysh S.N."/>
            <person name="Liesack W."/>
            <person name="Stott M.B."/>
            <person name="Alam M."/>
            <person name="Theisen A.R."/>
            <person name="Murrell J.C."/>
            <person name="Dunfield P.F."/>
        </authorList>
    </citation>
    <scope>NUCLEOTIDE SEQUENCE [LARGE SCALE GENOMIC DNA]</scope>
    <source>
        <strain>DSM 15510 / CIP 108128 / LMG 27833 / NCIMB 13906 / BL2</strain>
    </source>
</reference>
<proteinExistence type="inferred from homology"/>
<name>URE3_METSB</name>